<accession>P42828</accession>
<name>MTC1_RHOHA</name>
<sequence>MVVTSSAGCASRPRGRGRWPRLSRRSGCLEVPGRPRRPFLRPTVPGPTSARPRRGRAPHGRSTRCTGWRVQLSFSCPPFIKNRQFQFYLIRSPFSRVGYGLSDVNSSSLLGLWGIKFFACWENSNMIYIFKMLGYNQDKLPITSERLVPMASSISPEKLGAKIVEWYSCIVSREVEQAEEYKQEIGQLVNQLERSDEKVLSYYSLVLFRHQLLTEDVQQKRVEPTSLQAVNVEDTIYDGLLAFLYYFMSGQYEFYEGRYQSALRLYKIAEQKIDHVHDQSEKAEFYFRLGESYFAHHQYTFAVSYLEQAIDLFENNNFIWTILNCRLLLAAIKTELNLFDEAEKEYQSALADATPYPTTHALLLRALGLNRVRQRKLYEAEMYFAEALTIGDHSKSVEGLKTKANLANVRLRQNANNAEAIRLLQEAKAGATAIHLEECMVRCAITEALYINEGRDERLTSELQRLLEREFYTEYSELAEEIAEYYKQQSLLEKAFYYMKEALHYRTNMKMIGVEQQ</sequence>
<gene>
    <name type="primary">ceqIM</name>
    <name type="synonym">mceQI</name>
</gene>
<dbReference type="EC" id="2.1.1.72"/>
<dbReference type="EMBL" id="Z34099">
    <property type="protein sequence ID" value="CAA84006.1"/>
    <property type="molecule type" value="Genomic_DNA"/>
</dbReference>
<dbReference type="SMR" id="P42828"/>
<dbReference type="PRO" id="PR:P42828"/>
<dbReference type="GO" id="GO:0003677">
    <property type="term" value="F:DNA binding"/>
    <property type="evidence" value="ECO:0007669"/>
    <property type="project" value="UniProtKB-KW"/>
</dbReference>
<dbReference type="GO" id="GO:0009007">
    <property type="term" value="F:site-specific DNA-methyltransferase (adenine-specific) activity"/>
    <property type="evidence" value="ECO:0007669"/>
    <property type="project" value="UniProtKB-EC"/>
</dbReference>
<dbReference type="GO" id="GO:0009307">
    <property type="term" value="P:DNA restriction-modification system"/>
    <property type="evidence" value="ECO:0007669"/>
    <property type="project" value="UniProtKB-KW"/>
</dbReference>
<dbReference type="GO" id="GO:0032259">
    <property type="term" value="P:methylation"/>
    <property type="evidence" value="ECO:0007669"/>
    <property type="project" value="UniProtKB-KW"/>
</dbReference>
<dbReference type="Gene3D" id="1.25.40.10">
    <property type="entry name" value="Tetratricopeptide repeat domain"/>
    <property type="match status" value="1"/>
</dbReference>
<dbReference type="InterPro" id="IPR011990">
    <property type="entry name" value="TPR-like_helical_dom_sf"/>
</dbReference>
<dbReference type="InterPro" id="IPR019734">
    <property type="entry name" value="TPR_rpt"/>
</dbReference>
<dbReference type="Pfam" id="PF18801">
    <property type="entry name" value="RapH_N"/>
    <property type="match status" value="1"/>
</dbReference>
<dbReference type="SMART" id="SM00028">
    <property type="entry name" value="TPR"/>
    <property type="match status" value="3"/>
</dbReference>
<dbReference type="SUPFAM" id="SSF48452">
    <property type="entry name" value="TPR-like"/>
    <property type="match status" value="1"/>
</dbReference>
<dbReference type="PROSITE" id="PS50005">
    <property type="entry name" value="TPR"/>
    <property type="match status" value="3"/>
</dbReference>
<dbReference type="PROSITE" id="PS50293">
    <property type="entry name" value="TPR_REGION"/>
    <property type="match status" value="1"/>
</dbReference>
<organism>
    <name type="scientific">Rhodococcus hoagii</name>
    <name type="common">Corynebacterium equii</name>
    <dbReference type="NCBI Taxonomy" id="43767"/>
    <lineage>
        <taxon>Bacteria</taxon>
        <taxon>Bacillati</taxon>
        <taxon>Actinomycetota</taxon>
        <taxon>Actinomycetes</taxon>
        <taxon>Mycobacteriales</taxon>
        <taxon>Nocardiaceae</taxon>
        <taxon>Prescottella</taxon>
    </lineage>
</organism>
<evidence type="ECO:0000256" key="1">
    <source>
        <dbReference type="SAM" id="MobiDB-lite"/>
    </source>
</evidence>
<evidence type="ECO:0000303" key="2">
    <source>
    </source>
</evidence>
<evidence type="ECO:0000305" key="3">
    <source>
    </source>
</evidence>
<keyword id="KW-0238">DNA-binding</keyword>
<keyword id="KW-0489">Methyltransferase</keyword>
<keyword id="KW-0677">Repeat</keyword>
<keyword id="KW-0680">Restriction system</keyword>
<keyword id="KW-0949">S-adenosyl-L-methionine</keyword>
<keyword id="KW-0802">TPR repeat</keyword>
<keyword id="KW-0808">Transferase</keyword>
<reference key="1">
    <citation type="journal article" date="1997" name="Int. J. Biochem. Cell Biol.">
        <title>Cloning and characterization of the genes of the CeqI restriction-modification system.</title>
        <authorList>
            <person name="Izsvak Z."/>
            <person name="Jobbagy Z."/>
            <person name="Takacs I."/>
            <person name="Duda E."/>
        </authorList>
    </citation>
    <scope>NUCLEOTIDE SEQUENCE [GENOMIC DNA]</scope>
    <scope>FUNCTION</scope>
</reference>
<reference key="2">
    <citation type="journal article" date="2003" name="Nucleic Acids Res.">
        <title>A nomenclature for restriction enzymes, DNA methyltransferases, homing endonucleases and their genes.</title>
        <authorList>
            <person name="Roberts R.J."/>
            <person name="Belfort M."/>
            <person name="Bestor T."/>
            <person name="Bhagwat A.S."/>
            <person name="Bickle T.A."/>
            <person name="Bitinaite J."/>
            <person name="Blumenthal R.M."/>
            <person name="Degtyarev S.K."/>
            <person name="Dryden D.T."/>
            <person name="Dybvig K."/>
            <person name="Firman K."/>
            <person name="Gromova E.S."/>
            <person name="Gumport R.I."/>
            <person name="Halford S.E."/>
            <person name="Hattman S."/>
            <person name="Heitman J."/>
            <person name="Hornby D.P."/>
            <person name="Janulaitis A."/>
            <person name="Jeltsch A."/>
            <person name="Josephsen J."/>
            <person name="Kiss A."/>
            <person name="Klaenhammer T.R."/>
            <person name="Kobayashi I."/>
            <person name="Kong H."/>
            <person name="Krueger D.H."/>
            <person name="Lacks S."/>
            <person name="Marinus M.G."/>
            <person name="Miyahara M."/>
            <person name="Morgan R.D."/>
            <person name="Murray N.E."/>
            <person name="Nagaraja V."/>
            <person name="Piekarowicz A."/>
            <person name="Pingoud A."/>
            <person name="Raleigh E."/>
            <person name="Rao D.N."/>
            <person name="Reich N."/>
            <person name="Repin V.E."/>
            <person name="Selker E.U."/>
            <person name="Shaw P.C."/>
            <person name="Stein D.C."/>
            <person name="Stoddard B.L."/>
            <person name="Szybalski W."/>
            <person name="Trautner T.A."/>
            <person name="Van Etten J.L."/>
            <person name="Vitor J.M."/>
            <person name="Wilson G.G."/>
            <person name="Xu S.Y."/>
        </authorList>
    </citation>
    <scope>NOMENCLATURE</scope>
</reference>
<comment type="function">
    <text evidence="2 3">A methylase, recognizes the double-stranded sequence 5'-GATATC-3', methylates A-? on both strands, and protects the DNA from cleavage by the CeqI endonuclease.</text>
</comment>
<comment type="catalytic activity">
    <reaction>
        <text>a 2'-deoxyadenosine in DNA + S-adenosyl-L-methionine = an N(6)-methyl-2'-deoxyadenosine in DNA + S-adenosyl-L-homocysteine + H(+)</text>
        <dbReference type="Rhea" id="RHEA:15197"/>
        <dbReference type="Rhea" id="RHEA-COMP:12418"/>
        <dbReference type="Rhea" id="RHEA-COMP:12419"/>
        <dbReference type="ChEBI" id="CHEBI:15378"/>
        <dbReference type="ChEBI" id="CHEBI:57856"/>
        <dbReference type="ChEBI" id="CHEBI:59789"/>
        <dbReference type="ChEBI" id="CHEBI:90615"/>
        <dbReference type="ChEBI" id="CHEBI:90616"/>
        <dbReference type="EC" id="2.1.1.72"/>
    </reaction>
</comment>
<protein>
    <recommendedName>
        <fullName evidence="2">Type II methyltransferase M.CeqI</fullName>
        <shortName evidence="2">M.CeqI</shortName>
        <ecNumber>2.1.1.72</ecNumber>
    </recommendedName>
    <alternativeName>
        <fullName>Adenine-specific methyltransferase CeqI</fullName>
    </alternativeName>
    <alternativeName>
        <fullName>Modification methylase CeqI</fullName>
    </alternativeName>
</protein>
<feature type="chain" id="PRO_0000087951" description="Type II methyltransferase M.CeqI">
    <location>
        <begin position="1"/>
        <end position="517"/>
    </location>
</feature>
<feature type="repeat" description="TPR 1">
    <location>
        <begin position="283"/>
        <end position="316"/>
    </location>
</feature>
<feature type="repeat" description="TPR 2">
    <location>
        <begin position="361"/>
        <end position="394"/>
    </location>
</feature>
<feature type="repeat" description="TPR 3">
    <location>
        <begin position="476"/>
        <end position="509"/>
    </location>
</feature>
<feature type="region of interest" description="Disordered" evidence="1">
    <location>
        <begin position="1"/>
        <end position="21"/>
    </location>
</feature>
<feature type="region of interest" description="Disordered" evidence="1">
    <location>
        <begin position="33"/>
        <end position="62"/>
    </location>
</feature>
<feature type="compositionally biased region" description="Basic residues" evidence="1">
    <location>
        <begin position="51"/>
        <end position="62"/>
    </location>
</feature>
<proteinExistence type="predicted"/>